<accession>D6QZM5</accession>
<proteinExistence type="inferred from homology"/>
<name>AVLB8_WHEAT</name>
<organism>
    <name type="scientific">Triticum aestivum</name>
    <name type="common">Wheat</name>
    <dbReference type="NCBI Taxonomy" id="4565"/>
    <lineage>
        <taxon>Eukaryota</taxon>
        <taxon>Viridiplantae</taxon>
        <taxon>Streptophyta</taxon>
        <taxon>Embryophyta</taxon>
        <taxon>Tracheophyta</taxon>
        <taxon>Spermatophyta</taxon>
        <taxon>Magnoliopsida</taxon>
        <taxon>Liliopsida</taxon>
        <taxon>Poales</taxon>
        <taxon>Poaceae</taxon>
        <taxon>BOP clade</taxon>
        <taxon>Pooideae</taxon>
        <taxon>Triticodae</taxon>
        <taxon>Triticeae</taxon>
        <taxon>Triticinae</taxon>
        <taxon>Triticum</taxon>
    </lineage>
</organism>
<evidence type="ECO:0000250" key="1"/>
<evidence type="ECO:0000255" key="2"/>
<evidence type="ECO:0000305" key="3"/>
<sequence length="284" mass="32350">MKVFILALLALAATTAIAQLETTCSQGFGQSQQQQQPGQRQLLEQMKPCVAFLQQKCGPLRMPFLQTQVEQLSSCQIVQYQCCQQLAQIPERTRCHAIHIVVEAIIQQQSQQQWQEPQQQAQHKSMRMLLENLSLMCNIYVPVQCQQQQQLGQQQQQQLQEQLTPCTTFLQQQCSPVTVPFPQIPVDQPTSCQNVQHQCCRQLSQIPEQFRCQAIHNVAEAIRQQQPQQQWQGMYQPQQPAQLESIRMSLQALRSMCSIYIPVQCPAPTTYNIPLVATYTGGAC</sequence>
<comment type="function">
    <text evidence="1">Seed storage protein. Might be integrated via inter-chain disulfide bonds within the glutenin polymer (By similarity).</text>
</comment>
<comment type="PTM">
    <text evidence="3">Contains disulfide bonds.</text>
</comment>
<comment type="similarity">
    <text evidence="3">Belongs to the prolamin family.</text>
</comment>
<feature type="signal peptide" evidence="2">
    <location>
        <begin position="1"/>
        <end position="18"/>
    </location>
</feature>
<feature type="chain" id="PRO_0000410689" description="Avenin-like b8">
    <location>
        <begin position="19"/>
        <end position="284"/>
    </location>
</feature>
<reference key="1">
    <citation type="submission" date="2010-03" db="EMBL/GenBank/DDBJ databases">
        <title>Effect of avenin-like genes on gluten elasticity of wheat.</title>
        <authorList>
            <person name="Wang H.W."/>
            <person name="Ma F.Y."/>
            <person name="Wang Y.S."/>
            <person name="He G.Y."/>
        </authorList>
    </citation>
    <scope>NUCLEOTIDE SEQUENCE [GENOMIC DNA]</scope>
</reference>
<protein>
    <recommendedName>
        <fullName>Avenin-like b8</fullName>
    </recommendedName>
</protein>
<keyword id="KW-1015">Disulfide bond</keyword>
<keyword id="KW-1185">Reference proteome</keyword>
<keyword id="KW-0708">Seed storage protein</keyword>
<keyword id="KW-0732">Signal</keyword>
<keyword id="KW-0758">Storage protein</keyword>
<dbReference type="EMBL" id="HM027635">
    <property type="protein sequence ID" value="ADG45757.1"/>
    <property type="molecule type" value="Genomic_DNA"/>
</dbReference>
<dbReference type="SMR" id="D6QZM5"/>
<dbReference type="Proteomes" id="UP000019116">
    <property type="component" value="Unplaced"/>
</dbReference>
<dbReference type="ExpressionAtlas" id="D6QZM5">
    <property type="expression patterns" value="baseline and differential"/>
</dbReference>
<dbReference type="GO" id="GO:0045735">
    <property type="term" value="F:nutrient reservoir activity"/>
    <property type="evidence" value="ECO:0007669"/>
    <property type="project" value="UniProtKB-KW"/>
</dbReference>
<dbReference type="CDD" id="cd00261">
    <property type="entry name" value="AAI_SS"/>
    <property type="match status" value="2"/>
</dbReference>
<dbReference type="Gene3D" id="1.10.110.10">
    <property type="entry name" value="Plant lipid-transfer and hydrophobic proteins"/>
    <property type="match status" value="2"/>
</dbReference>
<dbReference type="InterPro" id="IPR036312">
    <property type="entry name" value="Bifun_inhib/LTP/seed_sf"/>
</dbReference>
<dbReference type="InterPro" id="IPR016140">
    <property type="entry name" value="Bifunc_inhib/LTP/seed_store"/>
</dbReference>
<dbReference type="InterPro" id="IPR001954">
    <property type="entry name" value="Glia_glutenin"/>
</dbReference>
<dbReference type="PANTHER" id="PTHR33454:SF11">
    <property type="entry name" value="AVENIN-LIKE B5"/>
    <property type="match status" value="1"/>
</dbReference>
<dbReference type="PANTHER" id="PTHR33454">
    <property type="entry name" value="PROLAMIN PPROL 14P"/>
    <property type="match status" value="1"/>
</dbReference>
<dbReference type="Pfam" id="PF13016">
    <property type="entry name" value="Gliadin"/>
    <property type="match status" value="2"/>
</dbReference>
<dbReference type="PRINTS" id="PR00208">
    <property type="entry name" value="GLIADGLUTEN"/>
</dbReference>
<dbReference type="PRINTS" id="PR00209">
    <property type="entry name" value="GLIADIN"/>
</dbReference>
<dbReference type="SMART" id="SM00499">
    <property type="entry name" value="AAI"/>
    <property type="match status" value="2"/>
</dbReference>
<dbReference type="SUPFAM" id="SSF47699">
    <property type="entry name" value="Bifunctional inhibitor/lipid-transfer protein/seed storage 2S albumin"/>
    <property type="match status" value="2"/>
</dbReference>